<dbReference type="EC" id="3.4.24.78" evidence="1"/>
<dbReference type="EMBL" id="AE017355">
    <property type="protein sequence ID" value="AAT63794.1"/>
    <property type="molecule type" value="Genomic_DNA"/>
</dbReference>
<dbReference type="RefSeq" id="WP_000662627.1">
    <property type="nucleotide sequence ID" value="NC_005957.1"/>
</dbReference>
<dbReference type="RefSeq" id="YP_038376.1">
    <property type="nucleotide sequence ID" value="NC_005957.1"/>
</dbReference>
<dbReference type="SMR" id="Q6HDK0"/>
<dbReference type="MEROPS" id="A25.001"/>
<dbReference type="KEGG" id="btk:BT9727_4058"/>
<dbReference type="PATRIC" id="fig|281309.8.peg.4330"/>
<dbReference type="HOGENOM" id="CLU_055087_1_0_9"/>
<dbReference type="Proteomes" id="UP000001301">
    <property type="component" value="Chromosome"/>
</dbReference>
<dbReference type="GO" id="GO:0004222">
    <property type="term" value="F:metalloendopeptidase activity"/>
    <property type="evidence" value="ECO:0007669"/>
    <property type="project" value="UniProtKB-UniRule"/>
</dbReference>
<dbReference type="GO" id="GO:0006508">
    <property type="term" value="P:proteolysis"/>
    <property type="evidence" value="ECO:0007669"/>
    <property type="project" value="UniProtKB-UniRule"/>
</dbReference>
<dbReference type="GO" id="GO:0009847">
    <property type="term" value="P:spore germination"/>
    <property type="evidence" value="ECO:0007669"/>
    <property type="project" value="UniProtKB-UniRule"/>
</dbReference>
<dbReference type="FunFam" id="3.40.50.1450:FF:000004">
    <property type="entry name" value="Germination protease"/>
    <property type="match status" value="1"/>
</dbReference>
<dbReference type="Gene3D" id="3.40.50.1450">
    <property type="entry name" value="HybD-like"/>
    <property type="match status" value="1"/>
</dbReference>
<dbReference type="HAMAP" id="MF_00626">
    <property type="entry name" value="Germination_prot"/>
    <property type="match status" value="1"/>
</dbReference>
<dbReference type="InterPro" id="IPR023430">
    <property type="entry name" value="Pept_HybD-like_dom_sf"/>
</dbReference>
<dbReference type="InterPro" id="IPR005080">
    <property type="entry name" value="Peptidase_A25"/>
</dbReference>
<dbReference type="NCBIfam" id="TIGR01441">
    <property type="entry name" value="GPR"/>
    <property type="match status" value="1"/>
</dbReference>
<dbReference type="Pfam" id="PF03418">
    <property type="entry name" value="Peptidase_A25"/>
    <property type="match status" value="1"/>
</dbReference>
<dbReference type="PIRSF" id="PIRSF019549">
    <property type="entry name" value="Peptidase_A25"/>
    <property type="match status" value="1"/>
</dbReference>
<dbReference type="SUPFAM" id="SSF53163">
    <property type="entry name" value="HybD-like"/>
    <property type="match status" value="1"/>
</dbReference>
<protein>
    <recommendedName>
        <fullName evidence="1">Germination protease</fullName>
        <ecNumber evidence="1">3.4.24.78</ecNumber>
    </recommendedName>
    <alternativeName>
        <fullName evidence="1">GPR endopeptidase</fullName>
    </alternativeName>
    <alternativeName>
        <fullName evidence="1">Germination proteinase</fullName>
    </alternativeName>
    <alternativeName>
        <fullName evidence="1">Spore protease</fullName>
    </alternativeName>
</protein>
<organism>
    <name type="scientific">Bacillus thuringiensis subsp. konkukian (strain 97-27)</name>
    <dbReference type="NCBI Taxonomy" id="281309"/>
    <lineage>
        <taxon>Bacteria</taxon>
        <taxon>Bacillati</taxon>
        <taxon>Bacillota</taxon>
        <taxon>Bacilli</taxon>
        <taxon>Bacillales</taxon>
        <taxon>Bacillaceae</taxon>
        <taxon>Bacillus</taxon>
        <taxon>Bacillus cereus group</taxon>
    </lineage>
</organism>
<reference key="1">
    <citation type="journal article" date="2006" name="J. Bacteriol.">
        <title>Pathogenomic sequence analysis of Bacillus cereus and Bacillus thuringiensis isolates closely related to Bacillus anthracis.</title>
        <authorList>
            <person name="Han C.S."/>
            <person name="Xie G."/>
            <person name="Challacombe J.F."/>
            <person name="Altherr M.R."/>
            <person name="Bhotika S.S."/>
            <person name="Bruce D."/>
            <person name="Campbell C.S."/>
            <person name="Campbell M.L."/>
            <person name="Chen J."/>
            <person name="Chertkov O."/>
            <person name="Cleland C."/>
            <person name="Dimitrijevic M."/>
            <person name="Doggett N.A."/>
            <person name="Fawcett J.J."/>
            <person name="Glavina T."/>
            <person name="Goodwin L.A."/>
            <person name="Hill K.K."/>
            <person name="Hitchcock P."/>
            <person name="Jackson P.J."/>
            <person name="Keim P."/>
            <person name="Kewalramani A.R."/>
            <person name="Longmire J."/>
            <person name="Lucas S."/>
            <person name="Malfatti S."/>
            <person name="McMurry K."/>
            <person name="Meincke L.J."/>
            <person name="Misra M."/>
            <person name="Moseman B.L."/>
            <person name="Mundt M."/>
            <person name="Munk A.C."/>
            <person name="Okinaka R.T."/>
            <person name="Parson-Quintana B."/>
            <person name="Reilly L.P."/>
            <person name="Richardson P."/>
            <person name="Robinson D.L."/>
            <person name="Rubin E."/>
            <person name="Saunders E."/>
            <person name="Tapia R."/>
            <person name="Tesmer J.G."/>
            <person name="Thayer N."/>
            <person name="Thompson L.S."/>
            <person name="Tice H."/>
            <person name="Ticknor L.O."/>
            <person name="Wills P.L."/>
            <person name="Brettin T.S."/>
            <person name="Gilna P."/>
        </authorList>
    </citation>
    <scope>NUCLEOTIDE SEQUENCE [LARGE SCALE GENOMIC DNA]</scope>
    <source>
        <strain>97-27</strain>
    </source>
</reference>
<proteinExistence type="inferred from homology"/>
<sequence length="367" mass="40464">MKEPLDLSKYSVRTDLAVEAHQMLQERQEEEKGIQGVIVKEREEEGVIITKVTIDEVASESMGKKPGNYLTLEVQGIRQQDTELQQKVERIFAKEFSYFLEEVGVTKEASCLIVGLGNWNVTPDALGPIVVENVLVTRHLFQLQPESVEEGFRPVSAIRPGVMGITGIETSDVIYGIIEKTKPDFVIAIDALAARSIERVNSTIQISDTGIHPGSGVGNKRKELSKETLGIPVIAIGVPTVVDAVSITSDTIDFILKHFGREMKEGNKPSRSLLPAGFTFGEKKKLTEEDMPDEKSRNMFLGAVGTLEDEEKRKLIYEVLSPLGHNLMVTPKEVDAFIEDMANVIASGLNAALHHQIDQDNTGAYTH</sequence>
<feature type="propeptide" id="PRO_0000026864" evidence="1">
    <location>
        <begin position="1"/>
        <end position="15"/>
    </location>
</feature>
<feature type="chain" id="PRO_0000026865" description="Germination protease">
    <location>
        <begin position="16"/>
        <end position="367"/>
    </location>
</feature>
<gene>
    <name evidence="1" type="primary">gpr</name>
    <name type="ordered locus">BT9727_4058</name>
</gene>
<keyword id="KW-0378">Hydrolase</keyword>
<keyword id="KW-0645">Protease</keyword>
<keyword id="KW-0865">Zymogen</keyword>
<accession>Q6HDK0</accession>
<comment type="function">
    <text evidence="1">Initiates the rapid degradation of small, acid-soluble proteins during spore germination.</text>
</comment>
<comment type="catalytic activity">
    <reaction evidence="1">
        <text>Endopeptidase action with P4 Glu or Asp, P1 preferably Glu &gt; Asp, P1' hydrophobic and P2' Ala.</text>
        <dbReference type="EC" id="3.4.24.78"/>
    </reaction>
</comment>
<comment type="subunit">
    <text evidence="1">Homotetramer.</text>
</comment>
<comment type="PTM">
    <text evidence="1">Autoproteolytically processed. The inactive tetrameric zymogen termed p46 autoprocesses to a smaller form termed p41, which is active only during spore germination.</text>
</comment>
<comment type="similarity">
    <text evidence="1">Belongs to the peptidase A25 family.</text>
</comment>
<name>GPR_BACHK</name>
<evidence type="ECO:0000255" key="1">
    <source>
        <dbReference type="HAMAP-Rule" id="MF_00626"/>
    </source>
</evidence>